<gene>
    <name evidence="1" type="primary">rpmJ</name>
    <name type="ordered locus">PD_1458</name>
</gene>
<reference key="1">
    <citation type="journal article" date="2003" name="J. Bacteriol.">
        <title>Comparative analyses of the complete genome sequences of Pierce's disease and citrus variegated chlorosis strains of Xylella fastidiosa.</title>
        <authorList>
            <person name="Van Sluys M.A."/>
            <person name="de Oliveira M.C."/>
            <person name="Monteiro-Vitorello C.B."/>
            <person name="Miyaki C.Y."/>
            <person name="Furlan L.R."/>
            <person name="Camargo L.E.A."/>
            <person name="da Silva A.C.R."/>
            <person name="Moon D.H."/>
            <person name="Takita M.A."/>
            <person name="Lemos E.G.M."/>
            <person name="Machado M.A."/>
            <person name="Ferro M.I.T."/>
            <person name="da Silva F.R."/>
            <person name="Goldman M.H.S."/>
            <person name="Goldman G.H."/>
            <person name="Lemos M.V.F."/>
            <person name="El-Dorry H."/>
            <person name="Tsai S.M."/>
            <person name="Carrer H."/>
            <person name="Carraro D.M."/>
            <person name="de Oliveira R.C."/>
            <person name="Nunes L.R."/>
            <person name="Siqueira W.J."/>
            <person name="Coutinho L.L."/>
            <person name="Kimura E.T."/>
            <person name="Ferro E.S."/>
            <person name="Harakava R."/>
            <person name="Kuramae E.E."/>
            <person name="Marino C.L."/>
            <person name="Giglioti E."/>
            <person name="Abreu I.L."/>
            <person name="Alves L.M.C."/>
            <person name="do Amaral A.M."/>
            <person name="Baia G.S."/>
            <person name="Blanco S.R."/>
            <person name="Brito M.S."/>
            <person name="Cannavan F.S."/>
            <person name="Celestino A.V."/>
            <person name="da Cunha A.F."/>
            <person name="Fenille R.C."/>
            <person name="Ferro J.A."/>
            <person name="Formighieri E.F."/>
            <person name="Kishi L.T."/>
            <person name="Leoni S.G."/>
            <person name="Oliveira A.R."/>
            <person name="Rosa V.E. Jr."/>
            <person name="Sassaki F.T."/>
            <person name="Sena J.A.D."/>
            <person name="de Souza A.A."/>
            <person name="Truffi D."/>
            <person name="Tsukumo F."/>
            <person name="Yanai G.M."/>
            <person name="Zaros L.G."/>
            <person name="Civerolo E.L."/>
            <person name="Simpson A.J.G."/>
            <person name="Almeida N.F. Jr."/>
            <person name="Setubal J.C."/>
            <person name="Kitajima J.P."/>
        </authorList>
    </citation>
    <scope>NUCLEOTIDE SEQUENCE [LARGE SCALE GENOMIC DNA]</scope>
    <source>
        <strain>Temecula1 / ATCC 700964</strain>
    </source>
</reference>
<proteinExistence type="inferred from homology"/>
<comment type="similarity">
    <text evidence="1">Belongs to the bacterial ribosomal protein bL36 family.</text>
</comment>
<feature type="chain" id="PRO_0000126301" description="Large ribosomal subunit protein bL36">
    <location>
        <begin position="1"/>
        <end position="41"/>
    </location>
</feature>
<dbReference type="EMBL" id="AE009442">
    <property type="protein sequence ID" value="AAO29302.1"/>
    <property type="molecule type" value="Genomic_DNA"/>
</dbReference>
<dbReference type="SMR" id="Q87BJ5"/>
<dbReference type="KEGG" id="xft:PD_1458"/>
<dbReference type="HOGENOM" id="CLU_135723_3_2_6"/>
<dbReference type="Proteomes" id="UP000002516">
    <property type="component" value="Chromosome"/>
</dbReference>
<dbReference type="GO" id="GO:1990904">
    <property type="term" value="C:ribonucleoprotein complex"/>
    <property type="evidence" value="ECO:0007669"/>
    <property type="project" value="UniProtKB-KW"/>
</dbReference>
<dbReference type="GO" id="GO:0005840">
    <property type="term" value="C:ribosome"/>
    <property type="evidence" value="ECO:0007669"/>
    <property type="project" value="UniProtKB-KW"/>
</dbReference>
<dbReference type="GO" id="GO:0003735">
    <property type="term" value="F:structural constituent of ribosome"/>
    <property type="evidence" value="ECO:0007669"/>
    <property type="project" value="InterPro"/>
</dbReference>
<dbReference type="GO" id="GO:0006412">
    <property type="term" value="P:translation"/>
    <property type="evidence" value="ECO:0007669"/>
    <property type="project" value="UniProtKB-UniRule"/>
</dbReference>
<dbReference type="HAMAP" id="MF_00251">
    <property type="entry name" value="Ribosomal_bL36"/>
    <property type="match status" value="1"/>
</dbReference>
<dbReference type="InterPro" id="IPR000473">
    <property type="entry name" value="Ribosomal_bL36"/>
</dbReference>
<dbReference type="InterPro" id="IPR035977">
    <property type="entry name" value="Ribosomal_bL36_sp"/>
</dbReference>
<dbReference type="InterPro" id="IPR047621">
    <property type="entry name" value="Ribosomal_L36_bact"/>
</dbReference>
<dbReference type="NCBIfam" id="NF002021">
    <property type="entry name" value="PRK00831.1"/>
    <property type="match status" value="1"/>
</dbReference>
<dbReference type="NCBIfam" id="TIGR01022">
    <property type="entry name" value="rpmJ_bact"/>
    <property type="match status" value="1"/>
</dbReference>
<dbReference type="PANTHER" id="PTHR47781">
    <property type="entry name" value="50S RIBOSOMAL PROTEIN L36 2"/>
    <property type="match status" value="1"/>
</dbReference>
<dbReference type="PANTHER" id="PTHR47781:SF1">
    <property type="entry name" value="LARGE RIBOSOMAL SUBUNIT PROTEIN BL36B"/>
    <property type="match status" value="1"/>
</dbReference>
<dbReference type="Pfam" id="PF00444">
    <property type="entry name" value="Ribosomal_L36"/>
    <property type="match status" value="1"/>
</dbReference>
<dbReference type="SUPFAM" id="SSF57840">
    <property type="entry name" value="Ribosomal protein L36"/>
    <property type="match status" value="1"/>
</dbReference>
<dbReference type="PROSITE" id="PS00828">
    <property type="entry name" value="RIBOSOMAL_L36"/>
    <property type="match status" value="1"/>
</dbReference>
<keyword id="KW-1185">Reference proteome</keyword>
<keyword id="KW-0687">Ribonucleoprotein</keyword>
<keyword id="KW-0689">Ribosomal protein</keyword>
<name>RL36_XYLFT</name>
<evidence type="ECO:0000255" key="1">
    <source>
        <dbReference type="HAMAP-Rule" id="MF_00251"/>
    </source>
</evidence>
<evidence type="ECO:0000305" key="2"/>
<accession>Q87BJ5</accession>
<organism>
    <name type="scientific">Xylella fastidiosa (strain Temecula1 / ATCC 700964)</name>
    <dbReference type="NCBI Taxonomy" id="183190"/>
    <lineage>
        <taxon>Bacteria</taxon>
        <taxon>Pseudomonadati</taxon>
        <taxon>Pseudomonadota</taxon>
        <taxon>Gammaproteobacteria</taxon>
        <taxon>Lysobacterales</taxon>
        <taxon>Lysobacteraceae</taxon>
        <taxon>Xylella</taxon>
    </lineage>
</organism>
<protein>
    <recommendedName>
        <fullName evidence="1">Large ribosomal subunit protein bL36</fullName>
    </recommendedName>
    <alternativeName>
        <fullName evidence="2">50S ribosomal protein L36</fullName>
    </alternativeName>
</protein>
<sequence length="41" mass="4857">MKVLSSLKSAKTRHRDCKVILRRGKIFVICKSNPRFKARQR</sequence>